<keyword id="KW-0131">Cell cycle</keyword>
<keyword id="KW-0132">Cell division</keyword>
<keyword id="KW-0342">GTP-binding</keyword>
<keyword id="KW-0460">Magnesium</keyword>
<keyword id="KW-0479">Metal-binding</keyword>
<keyword id="KW-0547">Nucleotide-binding</keyword>
<keyword id="KW-0717">Septation</keyword>
<proteinExistence type="inferred from homology"/>
<comment type="function">
    <text evidence="1">Necessary for normal cell division and for the maintenance of normal septation.</text>
</comment>
<comment type="cofactor">
    <cofactor evidence="1">
        <name>Mg(2+)</name>
        <dbReference type="ChEBI" id="CHEBI:18420"/>
    </cofactor>
</comment>
<comment type="similarity">
    <text evidence="1">Belongs to the TRAFAC class TrmE-Era-EngA-EngB-Septin-like GTPase superfamily. EngB GTPase family.</text>
</comment>
<gene>
    <name evidence="1" type="primary">engB</name>
    <name type="ordered locus">BCE33L4213</name>
</gene>
<reference key="1">
    <citation type="journal article" date="2006" name="J. Bacteriol.">
        <title>Pathogenomic sequence analysis of Bacillus cereus and Bacillus thuringiensis isolates closely related to Bacillus anthracis.</title>
        <authorList>
            <person name="Han C.S."/>
            <person name="Xie G."/>
            <person name="Challacombe J.F."/>
            <person name="Altherr M.R."/>
            <person name="Bhotika S.S."/>
            <person name="Bruce D."/>
            <person name="Campbell C.S."/>
            <person name="Campbell M.L."/>
            <person name="Chen J."/>
            <person name="Chertkov O."/>
            <person name="Cleland C."/>
            <person name="Dimitrijevic M."/>
            <person name="Doggett N.A."/>
            <person name="Fawcett J.J."/>
            <person name="Glavina T."/>
            <person name="Goodwin L.A."/>
            <person name="Hill K.K."/>
            <person name="Hitchcock P."/>
            <person name="Jackson P.J."/>
            <person name="Keim P."/>
            <person name="Kewalramani A.R."/>
            <person name="Longmire J."/>
            <person name="Lucas S."/>
            <person name="Malfatti S."/>
            <person name="McMurry K."/>
            <person name="Meincke L.J."/>
            <person name="Misra M."/>
            <person name="Moseman B.L."/>
            <person name="Mundt M."/>
            <person name="Munk A.C."/>
            <person name="Okinaka R.T."/>
            <person name="Parson-Quintana B."/>
            <person name="Reilly L.P."/>
            <person name="Richardson P."/>
            <person name="Robinson D.L."/>
            <person name="Rubin E."/>
            <person name="Saunders E."/>
            <person name="Tapia R."/>
            <person name="Tesmer J.G."/>
            <person name="Thayer N."/>
            <person name="Thompson L.S."/>
            <person name="Tice H."/>
            <person name="Ticknor L.O."/>
            <person name="Wills P.L."/>
            <person name="Brettin T.S."/>
            <person name="Gilna P."/>
        </authorList>
    </citation>
    <scope>NUCLEOTIDE SEQUENCE [LARGE SCALE GENOMIC DNA]</scope>
    <source>
        <strain>ZK / E33L</strain>
    </source>
</reference>
<dbReference type="EMBL" id="CP000001">
    <property type="protein sequence ID" value="AAU16058.1"/>
    <property type="molecule type" value="Genomic_DNA"/>
</dbReference>
<dbReference type="SMR" id="Q633X5"/>
<dbReference type="KEGG" id="bcz:BCE33L4213"/>
<dbReference type="PATRIC" id="fig|288681.22.peg.1170"/>
<dbReference type="Proteomes" id="UP000002612">
    <property type="component" value="Chromosome"/>
</dbReference>
<dbReference type="GO" id="GO:0005829">
    <property type="term" value="C:cytosol"/>
    <property type="evidence" value="ECO:0007669"/>
    <property type="project" value="TreeGrafter"/>
</dbReference>
<dbReference type="GO" id="GO:0005525">
    <property type="term" value="F:GTP binding"/>
    <property type="evidence" value="ECO:0007669"/>
    <property type="project" value="UniProtKB-UniRule"/>
</dbReference>
<dbReference type="GO" id="GO:0046872">
    <property type="term" value="F:metal ion binding"/>
    <property type="evidence" value="ECO:0007669"/>
    <property type="project" value="UniProtKB-KW"/>
</dbReference>
<dbReference type="GO" id="GO:0000917">
    <property type="term" value="P:division septum assembly"/>
    <property type="evidence" value="ECO:0007669"/>
    <property type="project" value="UniProtKB-KW"/>
</dbReference>
<dbReference type="CDD" id="cd01876">
    <property type="entry name" value="YihA_EngB"/>
    <property type="match status" value="1"/>
</dbReference>
<dbReference type="FunFam" id="3.40.50.300:FF:000098">
    <property type="entry name" value="Probable GTP-binding protein EngB"/>
    <property type="match status" value="1"/>
</dbReference>
<dbReference type="Gene3D" id="3.40.50.300">
    <property type="entry name" value="P-loop containing nucleotide triphosphate hydrolases"/>
    <property type="match status" value="1"/>
</dbReference>
<dbReference type="HAMAP" id="MF_00321">
    <property type="entry name" value="GTPase_EngB"/>
    <property type="match status" value="1"/>
</dbReference>
<dbReference type="InterPro" id="IPR030393">
    <property type="entry name" value="G_ENGB_dom"/>
</dbReference>
<dbReference type="InterPro" id="IPR006073">
    <property type="entry name" value="GTP-bd"/>
</dbReference>
<dbReference type="InterPro" id="IPR019987">
    <property type="entry name" value="GTP-bd_ribosome_bio_YsxC"/>
</dbReference>
<dbReference type="InterPro" id="IPR027417">
    <property type="entry name" value="P-loop_NTPase"/>
</dbReference>
<dbReference type="InterPro" id="IPR005225">
    <property type="entry name" value="Small_GTP-bd"/>
</dbReference>
<dbReference type="NCBIfam" id="TIGR03598">
    <property type="entry name" value="GTPase_YsxC"/>
    <property type="match status" value="1"/>
</dbReference>
<dbReference type="NCBIfam" id="TIGR00231">
    <property type="entry name" value="small_GTP"/>
    <property type="match status" value="1"/>
</dbReference>
<dbReference type="PANTHER" id="PTHR11649:SF13">
    <property type="entry name" value="ENGB-TYPE G DOMAIN-CONTAINING PROTEIN"/>
    <property type="match status" value="1"/>
</dbReference>
<dbReference type="PANTHER" id="PTHR11649">
    <property type="entry name" value="MSS1/TRME-RELATED GTP-BINDING PROTEIN"/>
    <property type="match status" value="1"/>
</dbReference>
<dbReference type="Pfam" id="PF01926">
    <property type="entry name" value="MMR_HSR1"/>
    <property type="match status" value="1"/>
</dbReference>
<dbReference type="SUPFAM" id="SSF52540">
    <property type="entry name" value="P-loop containing nucleoside triphosphate hydrolases"/>
    <property type="match status" value="1"/>
</dbReference>
<dbReference type="PROSITE" id="PS51706">
    <property type="entry name" value="G_ENGB"/>
    <property type="match status" value="1"/>
</dbReference>
<sequence length="198" mass="22386">MKVTKADIVISAVKPEQYPDGDLPEIALAGRSNVGKSSFINKILNRKKLVRISSKPGKTQTLNFFLINEMMHFVDVPGYGYAKVSKTERAAWGKMIETYFTTREQLDAAVLVVDLRHKPTNDDVMMYDFLKHYDIPTIIIATKADKIPKGKWQKHLKVVKETLDIESGDEVVLFSSETGLGKEEAWKAIHKFTKTKNA</sequence>
<name>ENGB_BACCZ</name>
<accession>Q633X5</accession>
<feature type="chain" id="PRO_0000266814" description="Probable GTP-binding protein EngB">
    <location>
        <begin position="1"/>
        <end position="198"/>
    </location>
</feature>
<feature type="domain" description="EngB-type G" evidence="1">
    <location>
        <begin position="22"/>
        <end position="195"/>
    </location>
</feature>
<feature type="binding site" evidence="1">
    <location>
        <begin position="30"/>
        <end position="37"/>
    </location>
    <ligand>
        <name>GTP</name>
        <dbReference type="ChEBI" id="CHEBI:37565"/>
    </ligand>
</feature>
<feature type="binding site" evidence="1">
    <location>
        <position position="37"/>
    </location>
    <ligand>
        <name>Mg(2+)</name>
        <dbReference type="ChEBI" id="CHEBI:18420"/>
    </ligand>
</feature>
<feature type="binding site" evidence="1">
    <location>
        <begin position="57"/>
        <end position="61"/>
    </location>
    <ligand>
        <name>GTP</name>
        <dbReference type="ChEBI" id="CHEBI:37565"/>
    </ligand>
</feature>
<feature type="binding site" evidence="1">
    <location>
        <position position="59"/>
    </location>
    <ligand>
        <name>Mg(2+)</name>
        <dbReference type="ChEBI" id="CHEBI:18420"/>
    </ligand>
</feature>
<feature type="binding site" evidence="1">
    <location>
        <begin position="75"/>
        <end position="78"/>
    </location>
    <ligand>
        <name>GTP</name>
        <dbReference type="ChEBI" id="CHEBI:37565"/>
    </ligand>
</feature>
<feature type="binding site" evidence="1">
    <location>
        <begin position="142"/>
        <end position="145"/>
    </location>
    <ligand>
        <name>GTP</name>
        <dbReference type="ChEBI" id="CHEBI:37565"/>
    </ligand>
</feature>
<feature type="binding site" evidence="1">
    <location>
        <begin position="174"/>
        <end position="176"/>
    </location>
    <ligand>
        <name>GTP</name>
        <dbReference type="ChEBI" id="CHEBI:37565"/>
    </ligand>
</feature>
<organism>
    <name type="scientific">Bacillus cereus (strain ZK / E33L)</name>
    <dbReference type="NCBI Taxonomy" id="288681"/>
    <lineage>
        <taxon>Bacteria</taxon>
        <taxon>Bacillati</taxon>
        <taxon>Bacillota</taxon>
        <taxon>Bacilli</taxon>
        <taxon>Bacillales</taxon>
        <taxon>Bacillaceae</taxon>
        <taxon>Bacillus</taxon>
        <taxon>Bacillus cereus group</taxon>
    </lineage>
</organism>
<protein>
    <recommendedName>
        <fullName evidence="1">Probable GTP-binding protein EngB</fullName>
    </recommendedName>
</protein>
<evidence type="ECO:0000255" key="1">
    <source>
        <dbReference type="HAMAP-Rule" id="MF_00321"/>
    </source>
</evidence>